<gene>
    <name evidence="1" type="primary">ygiB</name>
    <name type="ordered locus">Z4394</name>
    <name type="ordered locus">ECs3925</name>
</gene>
<organism>
    <name type="scientific">Escherichia coli O157:H7</name>
    <dbReference type="NCBI Taxonomy" id="83334"/>
    <lineage>
        <taxon>Bacteria</taxon>
        <taxon>Pseudomonadati</taxon>
        <taxon>Pseudomonadota</taxon>
        <taxon>Gammaproteobacteria</taxon>
        <taxon>Enterobacterales</taxon>
        <taxon>Enterobacteriaceae</taxon>
        <taxon>Escherichia</taxon>
    </lineage>
</organism>
<evidence type="ECO:0000255" key="1">
    <source>
        <dbReference type="HAMAP-Rule" id="MF_01188"/>
    </source>
</evidence>
<evidence type="ECO:0000256" key="2">
    <source>
        <dbReference type="SAM" id="MobiDB-lite"/>
    </source>
</evidence>
<evidence type="ECO:0000305" key="3"/>
<sequence>MKRTKSIRHASFRKNWSARHLTPVALAVATVFMLAGCEKSDETVSLYQNADDCSAANPGKSAECTTAYNNALKEAERTAPKYATREDCVAEFGEGQCQQAPAQAGMAPENQAQAQQSSGSFWMPLMAGYMMGRLMGGGAGFAQQPLFSSKNPASPAYGKYTDATGKNYGAAQPGRTMTVPKTAMAPKPATTTTVTRGGFGESVAKQSTMQRSATGTSSRSMGG</sequence>
<feature type="chain" id="PRO_0000293635" description="UPF0441 protein YgiB">
    <location>
        <begin position="1"/>
        <end position="223"/>
    </location>
</feature>
<feature type="region of interest" description="Disordered" evidence="2">
    <location>
        <begin position="178"/>
        <end position="223"/>
    </location>
</feature>
<feature type="compositionally biased region" description="Low complexity" evidence="2">
    <location>
        <begin position="178"/>
        <end position="195"/>
    </location>
</feature>
<feature type="compositionally biased region" description="Polar residues" evidence="2">
    <location>
        <begin position="204"/>
        <end position="223"/>
    </location>
</feature>
<accession>Q8XBP4</accession>
<accession>Q7AAR2</accession>
<keyword id="KW-1185">Reference proteome</keyword>
<name>YGIB_ECO57</name>
<protein>
    <recommendedName>
        <fullName evidence="1">UPF0441 protein YgiB</fullName>
    </recommendedName>
</protein>
<reference key="1">
    <citation type="journal article" date="2001" name="Nature">
        <title>Genome sequence of enterohaemorrhagic Escherichia coli O157:H7.</title>
        <authorList>
            <person name="Perna N.T."/>
            <person name="Plunkett G. III"/>
            <person name="Burland V."/>
            <person name="Mau B."/>
            <person name="Glasner J.D."/>
            <person name="Rose D.J."/>
            <person name="Mayhew G.F."/>
            <person name="Evans P.S."/>
            <person name="Gregor J."/>
            <person name="Kirkpatrick H.A."/>
            <person name="Posfai G."/>
            <person name="Hackett J."/>
            <person name="Klink S."/>
            <person name="Boutin A."/>
            <person name="Shao Y."/>
            <person name="Miller L."/>
            <person name="Grotbeck E.J."/>
            <person name="Davis N.W."/>
            <person name="Lim A."/>
            <person name="Dimalanta E.T."/>
            <person name="Potamousis K."/>
            <person name="Apodaca J."/>
            <person name="Anantharaman T.S."/>
            <person name="Lin J."/>
            <person name="Yen G."/>
            <person name="Schwartz D.C."/>
            <person name="Welch R.A."/>
            <person name="Blattner F.R."/>
        </authorList>
    </citation>
    <scope>NUCLEOTIDE SEQUENCE [LARGE SCALE GENOMIC DNA]</scope>
    <source>
        <strain>O157:H7 / EDL933 / ATCC 700927 / EHEC</strain>
    </source>
</reference>
<reference key="2">
    <citation type="journal article" date="2001" name="DNA Res.">
        <title>Complete genome sequence of enterohemorrhagic Escherichia coli O157:H7 and genomic comparison with a laboratory strain K-12.</title>
        <authorList>
            <person name="Hayashi T."/>
            <person name="Makino K."/>
            <person name="Ohnishi M."/>
            <person name="Kurokawa K."/>
            <person name="Ishii K."/>
            <person name="Yokoyama K."/>
            <person name="Han C.-G."/>
            <person name="Ohtsubo E."/>
            <person name="Nakayama K."/>
            <person name="Murata T."/>
            <person name="Tanaka M."/>
            <person name="Tobe T."/>
            <person name="Iida T."/>
            <person name="Takami H."/>
            <person name="Honda T."/>
            <person name="Sasakawa C."/>
            <person name="Ogasawara N."/>
            <person name="Yasunaga T."/>
            <person name="Kuhara S."/>
            <person name="Shiba T."/>
            <person name="Hattori M."/>
            <person name="Shinagawa H."/>
        </authorList>
    </citation>
    <scope>NUCLEOTIDE SEQUENCE [LARGE SCALE GENOMIC DNA]</scope>
    <source>
        <strain>O157:H7 / Sakai / RIMD 0509952 / EHEC</strain>
    </source>
</reference>
<proteinExistence type="inferred from homology"/>
<dbReference type="EMBL" id="AE005174">
    <property type="protein sequence ID" value="AAG58176.1"/>
    <property type="status" value="ALT_INIT"/>
    <property type="molecule type" value="Genomic_DNA"/>
</dbReference>
<dbReference type="EMBL" id="BA000007">
    <property type="protein sequence ID" value="BAB37348.2"/>
    <property type="molecule type" value="Genomic_DNA"/>
</dbReference>
<dbReference type="PIR" id="D85964">
    <property type="entry name" value="D85964"/>
</dbReference>
<dbReference type="PIR" id="E91119">
    <property type="entry name" value="E91119"/>
</dbReference>
<dbReference type="RefSeq" id="NP_311952.2">
    <property type="nucleotide sequence ID" value="NC_002695.1"/>
</dbReference>
<dbReference type="RefSeq" id="WP_000831543.1">
    <property type="nucleotide sequence ID" value="NZ_VOAI01000009.1"/>
</dbReference>
<dbReference type="SMR" id="Q8XBP4"/>
<dbReference type="STRING" id="155864.Z4394"/>
<dbReference type="GeneID" id="916246"/>
<dbReference type="KEGG" id="ece:Z4394"/>
<dbReference type="KEGG" id="ecs:ECs_3925"/>
<dbReference type="PATRIC" id="fig|386585.9.peg.4093"/>
<dbReference type="eggNOG" id="COG5463">
    <property type="taxonomic scope" value="Bacteria"/>
</dbReference>
<dbReference type="HOGENOM" id="CLU_095624_0_0_6"/>
<dbReference type="OMA" id="NRYYSQP"/>
<dbReference type="Proteomes" id="UP000000558">
    <property type="component" value="Chromosome"/>
</dbReference>
<dbReference type="Proteomes" id="UP000002519">
    <property type="component" value="Chromosome"/>
</dbReference>
<dbReference type="HAMAP" id="MF_01188">
    <property type="entry name" value="UPF0441"/>
    <property type="match status" value="1"/>
</dbReference>
<dbReference type="InterPro" id="IPR009576">
    <property type="entry name" value="Biofilm_formation_YgiB"/>
</dbReference>
<dbReference type="NCBIfam" id="NF008655">
    <property type="entry name" value="PRK11653.1"/>
    <property type="match status" value="1"/>
</dbReference>
<dbReference type="Pfam" id="PF06693">
    <property type="entry name" value="DUF1190"/>
    <property type="match status" value="1"/>
</dbReference>
<comment type="similarity">
    <text evidence="1">Belongs to the UPF0441 family.</text>
</comment>
<comment type="sequence caution" evidence="3">
    <conflict type="erroneous initiation">
        <sequence resource="EMBL-CDS" id="AAG58176"/>
    </conflict>
    <text>Extended N-terminus.</text>
</comment>